<proteinExistence type="inferred from homology"/>
<sequence>MAAQTQRAVLAGGCFWGMEELIRRLPGVTATRVGYTGGDVPNATYRNHGTHAEAIEILFDPEATDYRALLEFFFQIHDPSTKNRQGNDIGLSYRSAIYYVDDEQKRIAEDTIADVDASGLWPGKVVTEVEPVGPFWEAEPEHQDYLQRYPDGYTCHFPRPGWRLPARSGSEG</sequence>
<reference key="1">
    <citation type="journal article" date="2002" name="Nature">
        <title>Complete genome sequence of the model actinomycete Streptomyces coelicolor A3(2).</title>
        <authorList>
            <person name="Bentley S.D."/>
            <person name="Chater K.F."/>
            <person name="Cerdeno-Tarraga A.-M."/>
            <person name="Challis G.L."/>
            <person name="Thomson N.R."/>
            <person name="James K.D."/>
            <person name="Harris D.E."/>
            <person name="Quail M.A."/>
            <person name="Kieser H."/>
            <person name="Harper D."/>
            <person name="Bateman A."/>
            <person name="Brown S."/>
            <person name="Chandra G."/>
            <person name="Chen C.W."/>
            <person name="Collins M."/>
            <person name="Cronin A."/>
            <person name="Fraser A."/>
            <person name="Goble A."/>
            <person name="Hidalgo J."/>
            <person name="Hornsby T."/>
            <person name="Howarth S."/>
            <person name="Huang C.-H."/>
            <person name="Kieser T."/>
            <person name="Larke L."/>
            <person name="Murphy L.D."/>
            <person name="Oliver K."/>
            <person name="O'Neil S."/>
            <person name="Rabbinowitsch E."/>
            <person name="Rajandream M.A."/>
            <person name="Rutherford K.M."/>
            <person name="Rutter S."/>
            <person name="Seeger K."/>
            <person name="Saunders D."/>
            <person name="Sharp S."/>
            <person name="Squares R."/>
            <person name="Squares S."/>
            <person name="Taylor K."/>
            <person name="Warren T."/>
            <person name="Wietzorrek A."/>
            <person name="Woodward J.R."/>
            <person name="Barrell B.G."/>
            <person name="Parkhill J."/>
            <person name="Hopwood D.A."/>
        </authorList>
    </citation>
    <scope>NUCLEOTIDE SEQUENCE [LARGE SCALE GENOMIC DNA]</scope>
    <source>
        <strain>ATCC BAA-471 / A3(2) / M145</strain>
    </source>
</reference>
<keyword id="KW-0560">Oxidoreductase</keyword>
<keyword id="KW-1185">Reference proteome</keyword>
<gene>
    <name evidence="1" type="primary">msrA</name>
    <name type="ordered locus">SCO4956</name>
    <name type="ORF">2SCK31.16</name>
</gene>
<name>MSRA_STRCO</name>
<feature type="chain" id="PRO_0000138595" description="Peptide methionine sulfoxide reductase MsrA">
    <location>
        <begin position="1"/>
        <end position="172"/>
    </location>
</feature>
<feature type="active site" evidence="1">
    <location>
        <position position="14"/>
    </location>
</feature>
<organism>
    <name type="scientific">Streptomyces coelicolor (strain ATCC BAA-471 / A3(2) / M145)</name>
    <dbReference type="NCBI Taxonomy" id="100226"/>
    <lineage>
        <taxon>Bacteria</taxon>
        <taxon>Bacillati</taxon>
        <taxon>Actinomycetota</taxon>
        <taxon>Actinomycetes</taxon>
        <taxon>Kitasatosporales</taxon>
        <taxon>Streptomycetaceae</taxon>
        <taxon>Streptomyces</taxon>
        <taxon>Streptomyces albidoflavus group</taxon>
    </lineage>
</organism>
<protein>
    <recommendedName>
        <fullName evidence="1">Peptide methionine sulfoxide reductase MsrA</fullName>
        <shortName evidence="1">Protein-methionine-S-oxide reductase</shortName>
        <ecNumber evidence="1">1.8.4.11</ecNumber>
    </recommendedName>
    <alternativeName>
        <fullName evidence="1">Peptide-methionine (S)-S-oxide reductase</fullName>
        <shortName evidence="1">Peptide Met(O) reductase</shortName>
    </alternativeName>
</protein>
<comment type="function">
    <text evidence="1">Has an important function as a repair enzyme for proteins that have been inactivated by oxidation. Catalyzes the reversible oxidation-reduction of methionine sulfoxide in proteins to methionine.</text>
</comment>
<comment type="catalytic activity">
    <reaction evidence="1">
        <text>L-methionyl-[protein] + [thioredoxin]-disulfide + H2O = L-methionyl-(S)-S-oxide-[protein] + [thioredoxin]-dithiol</text>
        <dbReference type="Rhea" id="RHEA:14217"/>
        <dbReference type="Rhea" id="RHEA-COMP:10698"/>
        <dbReference type="Rhea" id="RHEA-COMP:10700"/>
        <dbReference type="Rhea" id="RHEA-COMP:12313"/>
        <dbReference type="Rhea" id="RHEA-COMP:12315"/>
        <dbReference type="ChEBI" id="CHEBI:15377"/>
        <dbReference type="ChEBI" id="CHEBI:16044"/>
        <dbReference type="ChEBI" id="CHEBI:29950"/>
        <dbReference type="ChEBI" id="CHEBI:44120"/>
        <dbReference type="ChEBI" id="CHEBI:50058"/>
        <dbReference type="EC" id="1.8.4.11"/>
    </reaction>
</comment>
<comment type="catalytic activity">
    <reaction evidence="1">
        <text>[thioredoxin]-disulfide + L-methionine + H2O = L-methionine (S)-S-oxide + [thioredoxin]-dithiol</text>
        <dbReference type="Rhea" id="RHEA:19993"/>
        <dbReference type="Rhea" id="RHEA-COMP:10698"/>
        <dbReference type="Rhea" id="RHEA-COMP:10700"/>
        <dbReference type="ChEBI" id="CHEBI:15377"/>
        <dbReference type="ChEBI" id="CHEBI:29950"/>
        <dbReference type="ChEBI" id="CHEBI:50058"/>
        <dbReference type="ChEBI" id="CHEBI:57844"/>
        <dbReference type="ChEBI" id="CHEBI:58772"/>
        <dbReference type="EC" id="1.8.4.11"/>
    </reaction>
</comment>
<comment type="similarity">
    <text evidence="1">Belongs to the MsrA Met sulfoxide reductase family.</text>
</comment>
<evidence type="ECO:0000255" key="1">
    <source>
        <dbReference type="HAMAP-Rule" id="MF_01401"/>
    </source>
</evidence>
<dbReference type="EC" id="1.8.4.11" evidence="1"/>
<dbReference type="EMBL" id="AL939122">
    <property type="protein sequence ID" value="CAD30942.1"/>
    <property type="molecule type" value="Genomic_DNA"/>
</dbReference>
<dbReference type="RefSeq" id="NP_629108.1">
    <property type="nucleotide sequence ID" value="NC_003888.3"/>
</dbReference>
<dbReference type="RefSeq" id="WP_003974020.1">
    <property type="nucleotide sequence ID" value="NZ_VNID01000027.1"/>
</dbReference>
<dbReference type="SMR" id="Q9EWF7"/>
<dbReference type="FunCoup" id="Q9EWF7">
    <property type="interactions" value="395"/>
</dbReference>
<dbReference type="STRING" id="100226.gene:17762605"/>
<dbReference type="PaxDb" id="100226-SCO4956"/>
<dbReference type="GeneID" id="96655718"/>
<dbReference type="KEGG" id="sco:SCO4956"/>
<dbReference type="PATRIC" id="fig|100226.15.peg.5036"/>
<dbReference type="eggNOG" id="COG0225">
    <property type="taxonomic scope" value="Bacteria"/>
</dbReference>
<dbReference type="HOGENOM" id="CLU_031040_10_2_11"/>
<dbReference type="InParanoid" id="Q9EWF7"/>
<dbReference type="OrthoDB" id="4174719at2"/>
<dbReference type="PhylomeDB" id="Q9EWF7"/>
<dbReference type="Proteomes" id="UP000001973">
    <property type="component" value="Chromosome"/>
</dbReference>
<dbReference type="GO" id="GO:0005737">
    <property type="term" value="C:cytoplasm"/>
    <property type="evidence" value="ECO:0000318"/>
    <property type="project" value="GO_Central"/>
</dbReference>
<dbReference type="GO" id="GO:0036456">
    <property type="term" value="F:L-methionine-(S)-S-oxide reductase activity"/>
    <property type="evidence" value="ECO:0000318"/>
    <property type="project" value="GO_Central"/>
</dbReference>
<dbReference type="GO" id="GO:0008113">
    <property type="term" value="F:peptide-methionine (S)-S-oxide reductase activity"/>
    <property type="evidence" value="ECO:0000318"/>
    <property type="project" value="GO_Central"/>
</dbReference>
<dbReference type="GO" id="GO:0034599">
    <property type="term" value="P:cellular response to oxidative stress"/>
    <property type="evidence" value="ECO:0000318"/>
    <property type="project" value="GO_Central"/>
</dbReference>
<dbReference type="GO" id="GO:0036211">
    <property type="term" value="P:protein modification process"/>
    <property type="evidence" value="ECO:0007669"/>
    <property type="project" value="UniProtKB-UniRule"/>
</dbReference>
<dbReference type="FunFam" id="3.30.1060.10:FF:000005">
    <property type="entry name" value="Peptide methionine sulfoxide reductase MsrA"/>
    <property type="match status" value="1"/>
</dbReference>
<dbReference type="Gene3D" id="3.30.1060.10">
    <property type="entry name" value="Peptide methionine sulphoxide reductase MsrA"/>
    <property type="match status" value="1"/>
</dbReference>
<dbReference type="HAMAP" id="MF_01401">
    <property type="entry name" value="MsrA"/>
    <property type="match status" value="1"/>
</dbReference>
<dbReference type="InterPro" id="IPR002569">
    <property type="entry name" value="Met_Sox_Rdtase_MsrA_dom"/>
</dbReference>
<dbReference type="InterPro" id="IPR036509">
    <property type="entry name" value="Met_Sox_Rdtase_MsrA_sf"/>
</dbReference>
<dbReference type="NCBIfam" id="TIGR00401">
    <property type="entry name" value="msrA"/>
    <property type="match status" value="1"/>
</dbReference>
<dbReference type="PANTHER" id="PTHR43774">
    <property type="entry name" value="PEPTIDE METHIONINE SULFOXIDE REDUCTASE"/>
    <property type="match status" value="1"/>
</dbReference>
<dbReference type="PANTHER" id="PTHR43774:SF1">
    <property type="entry name" value="PEPTIDE METHIONINE SULFOXIDE REDUCTASE MSRA 2"/>
    <property type="match status" value="1"/>
</dbReference>
<dbReference type="Pfam" id="PF01625">
    <property type="entry name" value="PMSR"/>
    <property type="match status" value="1"/>
</dbReference>
<dbReference type="SUPFAM" id="SSF55068">
    <property type="entry name" value="Peptide methionine sulfoxide reductase"/>
    <property type="match status" value="1"/>
</dbReference>
<accession>Q9EWF7</accession>